<name>RHMD_BURCM</name>
<dbReference type="EC" id="4.2.1.90" evidence="1"/>
<dbReference type="EMBL" id="CP000441">
    <property type="protein sequence ID" value="ABI88953.1"/>
    <property type="molecule type" value="Genomic_DNA"/>
</dbReference>
<dbReference type="RefSeq" id="WP_011658428.1">
    <property type="nucleotide sequence ID" value="NC_008391.1"/>
</dbReference>
<dbReference type="SMR" id="Q0BA70"/>
<dbReference type="GeneID" id="93086403"/>
<dbReference type="KEGG" id="bam:Bamb_3399"/>
<dbReference type="PATRIC" id="fig|339670.21.peg.3611"/>
<dbReference type="eggNOG" id="COG4948">
    <property type="taxonomic scope" value="Bacteria"/>
</dbReference>
<dbReference type="Proteomes" id="UP000000662">
    <property type="component" value="Chromosome 2"/>
</dbReference>
<dbReference type="GO" id="GO:0050032">
    <property type="term" value="F:L-rhamnonate dehydratase activity"/>
    <property type="evidence" value="ECO:0007669"/>
    <property type="project" value="UniProtKB-UniRule"/>
</dbReference>
<dbReference type="GO" id="GO:0000287">
    <property type="term" value="F:magnesium ion binding"/>
    <property type="evidence" value="ECO:0007669"/>
    <property type="project" value="UniProtKB-UniRule"/>
</dbReference>
<dbReference type="GO" id="GO:0009063">
    <property type="term" value="P:amino acid catabolic process"/>
    <property type="evidence" value="ECO:0007669"/>
    <property type="project" value="InterPro"/>
</dbReference>
<dbReference type="GO" id="GO:0016052">
    <property type="term" value="P:carbohydrate catabolic process"/>
    <property type="evidence" value="ECO:0007669"/>
    <property type="project" value="TreeGrafter"/>
</dbReference>
<dbReference type="CDD" id="cd03327">
    <property type="entry name" value="MR_like_2"/>
    <property type="match status" value="1"/>
</dbReference>
<dbReference type="FunFam" id="3.20.20.120:FF:000005">
    <property type="entry name" value="Putative L-rhamnonate dehydratase"/>
    <property type="match status" value="1"/>
</dbReference>
<dbReference type="Gene3D" id="3.20.20.120">
    <property type="entry name" value="Enolase-like C-terminal domain"/>
    <property type="match status" value="1"/>
</dbReference>
<dbReference type="Gene3D" id="3.30.390.10">
    <property type="entry name" value="Enolase-like, N-terminal domain"/>
    <property type="match status" value="1"/>
</dbReference>
<dbReference type="HAMAP" id="MF_01288">
    <property type="entry name" value="Rhamnon_dehydrat"/>
    <property type="match status" value="1"/>
</dbReference>
<dbReference type="InterPro" id="IPR036849">
    <property type="entry name" value="Enolase-like_C_sf"/>
</dbReference>
<dbReference type="InterPro" id="IPR029017">
    <property type="entry name" value="Enolase-like_N"/>
</dbReference>
<dbReference type="InterPro" id="IPR029065">
    <property type="entry name" value="Enolase_C-like"/>
</dbReference>
<dbReference type="InterPro" id="IPR023444">
    <property type="entry name" value="L-Rhamnon_dehydrat"/>
</dbReference>
<dbReference type="InterPro" id="IPR018110">
    <property type="entry name" value="Mandel_Rmase/mucon_lact_enz_CS"/>
</dbReference>
<dbReference type="InterPro" id="IPR013342">
    <property type="entry name" value="Mandelate_racemase_C"/>
</dbReference>
<dbReference type="InterPro" id="IPR013341">
    <property type="entry name" value="Mandelate_racemase_N_dom"/>
</dbReference>
<dbReference type="InterPro" id="IPR046945">
    <property type="entry name" value="RHMD-like"/>
</dbReference>
<dbReference type="NCBIfam" id="NF011968">
    <property type="entry name" value="PRK15440.1"/>
    <property type="match status" value="1"/>
</dbReference>
<dbReference type="PANTHER" id="PTHR13794">
    <property type="entry name" value="ENOLASE SUPERFAMILY, MANDELATE RACEMASE"/>
    <property type="match status" value="1"/>
</dbReference>
<dbReference type="PANTHER" id="PTHR13794:SF58">
    <property type="entry name" value="MITOCHONDRIAL ENOLASE SUPERFAMILY MEMBER 1"/>
    <property type="match status" value="1"/>
</dbReference>
<dbReference type="Pfam" id="PF13378">
    <property type="entry name" value="MR_MLE_C"/>
    <property type="match status" value="1"/>
</dbReference>
<dbReference type="Pfam" id="PF02746">
    <property type="entry name" value="MR_MLE_N"/>
    <property type="match status" value="1"/>
</dbReference>
<dbReference type="SFLD" id="SFLDS00001">
    <property type="entry name" value="Enolase"/>
    <property type="match status" value="1"/>
</dbReference>
<dbReference type="SFLD" id="SFLDF00006">
    <property type="entry name" value="rhamnonate_dehydratase"/>
    <property type="match status" value="1"/>
</dbReference>
<dbReference type="SMART" id="SM00922">
    <property type="entry name" value="MR_MLE"/>
    <property type="match status" value="1"/>
</dbReference>
<dbReference type="SUPFAM" id="SSF51604">
    <property type="entry name" value="Enolase C-terminal domain-like"/>
    <property type="match status" value="1"/>
</dbReference>
<dbReference type="SUPFAM" id="SSF54826">
    <property type="entry name" value="Enolase N-terminal domain-like"/>
    <property type="match status" value="1"/>
</dbReference>
<dbReference type="PROSITE" id="PS00908">
    <property type="entry name" value="MR_MLE_1"/>
    <property type="match status" value="1"/>
</dbReference>
<reference key="1">
    <citation type="submission" date="2006-08" db="EMBL/GenBank/DDBJ databases">
        <title>Complete sequence of chromosome 2 of Burkholderia cepacia AMMD.</title>
        <authorList>
            <person name="Copeland A."/>
            <person name="Lucas S."/>
            <person name="Lapidus A."/>
            <person name="Barry K."/>
            <person name="Detter J.C."/>
            <person name="Glavina del Rio T."/>
            <person name="Hammon N."/>
            <person name="Israni S."/>
            <person name="Pitluck S."/>
            <person name="Bruce D."/>
            <person name="Chain P."/>
            <person name="Malfatti S."/>
            <person name="Shin M."/>
            <person name="Vergez L."/>
            <person name="Schmutz J."/>
            <person name="Larimer F."/>
            <person name="Land M."/>
            <person name="Hauser L."/>
            <person name="Kyrpides N."/>
            <person name="Kim E."/>
            <person name="Parke J."/>
            <person name="Coenye T."/>
            <person name="Konstantinidis K."/>
            <person name="Ramette A."/>
            <person name="Tiedje J."/>
            <person name="Richardson P."/>
        </authorList>
    </citation>
    <scope>NUCLEOTIDE SEQUENCE [LARGE SCALE GENOMIC DNA]</scope>
    <source>
        <strain>ATCC BAA-244 / DSM 16087 / CCUG 44356 / LMG 19182 / AMMD</strain>
    </source>
</reference>
<proteinExistence type="inferred from homology"/>
<protein>
    <recommendedName>
        <fullName evidence="1">L-rhamnonate dehydratase</fullName>
        <shortName evidence="1">RhamD</shortName>
        <ecNumber evidence="1">4.2.1.90</ecNumber>
    </recommendedName>
</protein>
<sequence length="392" mass="43796">MSMPTIRAVRALTVRGGGADYHDQDAGHWIDDHIATPMSRYPEYRQSRQSFGINVLGTLVIEIEASDGTVGFAVTTGGEIGAFIVERHLARFIEGQRVTDIEKMWDQMFYATLYYGRKGVVLNAISGVDLALWDLLGKVRQEPVHQLLGGKVRDELEFYATGARPDLAKEMGFIGGKLPLHHGPAEGDAGLRRNLDALADMRSRVGDDFWLMLDCWMSLDVPYATRLAHGAHALGLKWIEECLPPDDYWGYAKLRRDVPRGMLVTTGEHEATRWGFRMLLEMECCDIIQPDVGWCGGLTELMRISALADARGVLVIPHGSSVYSYHFVATRHNSPFAEFLMMAPQADRVVPMFDPLLLDEPVPVGGRMKVPDTAGFGVRLNPDVRMQRPYEH</sequence>
<feature type="chain" id="PRO_0000351682" description="L-rhamnonate dehydratase">
    <location>
        <begin position="1"/>
        <end position="392"/>
    </location>
</feature>
<feature type="active site" description="Proton acceptor" evidence="1">
    <location>
        <position position="318"/>
    </location>
</feature>
<feature type="binding site" evidence="1">
    <location>
        <position position="22"/>
    </location>
    <ligand>
        <name>substrate</name>
    </ligand>
</feature>
<feature type="binding site" evidence="1">
    <location>
        <position position="48"/>
    </location>
    <ligand>
        <name>substrate</name>
    </ligand>
</feature>
<feature type="binding site" evidence="1">
    <location>
        <position position="214"/>
    </location>
    <ligand>
        <name>Mg(2+)</name>
        <dbReference type="ChEBI" id="CHEBI:18420"/>
    </ligand>
</feature>
<feature type="binding site" evidence="1">
    <location>
        <position position="240"/>
    </location>
    <ligand>
        <name>Mg(2+)</name>
        <dbReference type="ChEBI" id="CHEBI:18420"/>
    </ligand>
</feature>
<feature type="binding site" evidence="1">
    <location>
        <position position="268"/>
    </location>
    <ligand>
        <name>Mg(2+)</name>
        <dbReference type="ChEBI" id="CHEBI:18420"/>
    </ligand>
</feature>
<feature type="binding site" evidence="1">
    <location>
        <position position="338"/>
    </location>
    <ligand>
        <name>substrate</name>
    </ligand>
</feature>
<feature type="site" description="Increases basicity of active site His" evidence="1">
    <location>
        <position position="291"/>
    </location>
</feature>
<feature type="site" description="Transition state stabilizer" evidence="1">
    <location>
        <position position="338"/>
    </location>
</feature>
<accession>Q0BA70</accession>
<organism>
    <name type="scientific">Burkholderia ambifaria (strain ATCC BAA-244 / DSM 16087 / CCUG 44356 / LMG 19182 / AMMD)</name>
    <name type="common">Burkholderia cepacia (strain AMMD)</name>
    <dbReference type="NCBI Taxonomy" id="339670"/>
    <lineage>
        <taxon>Bacteria</taxon>
        <taxon>Pseudomonadati</taxon>
        <taxon>Pseudomonadota</taxon>
        <taxon>Betaproteobacteria</taxon>
        <taxon>Burkholderiales</taxon>
        <taxon>Burkholderiaceae</taxon>
        <taxon>Burkholderia</taxon>
        <taxon>Burkholderia cepacia complex</taxon>
    </lineage>
</organism>
<gene>
    <name evidence="1" type="primary">rhmD</name>
    <name type="ordered locus">Bamb_3399</name>
</gene>
<comment type="function">
    <text evidence="1">Catalyzes the dehydration of L-rhamnonate to 2-keto-3-deoxy-L-rhamnonate (KDR).</text>
</comment>
<comment type="catalytic activity">
    <reaction evidence="1">
        <text>L-rhamnonate = 2-dehydro-3-deoxy-L-rhamnonate + H2O</text>
        <dbReference type="Rhea" id="RHEA:23080"/>
        <dbReference type="ChEBI" id="CHEBI:15377"/>
        <dbReference type="ChEBI" id="CHEBI:58118"/>
        <dbReference type="ChEBI" id="CHEBI:58371"/>
        <dbReference type="EC" id="4.2.1.90"/>
    </reaction>
</comment>
<comment type="cofactor">
    <cofactor evidence="1">
        <name>Mg(2+)</name>
        <dbReference type="ChEBI" id="CHEBI:18420"/>
    </cofactor>
    <text evidence="1">Binds 1 Mg(2+) ion per subunit.</text>
</comment>
<comment type="subunit">
    <text evidence="1">Homooctamer; tetramer of dimers.</text>
</comment>
<comment type="miscellaneous">
    <text evidence="1">Reaction proceeds via a syn dehydration.</text>
</comment>
<comment type="similarity">
    <text evidence="1">Belongs to the mandelate racemase/muconate lactonizing enzyme family. RhamD subfamily.</text>
</comment>
<evidence type="ECO:0000255" key="1">
    <source>
        <dbReference type="HAMAP-Rule" id="MF_01288"/>
    </source>
</evidence>
<keyword id="KW-0456">Lyase</keyword>
<keyword id="KW-0460">Magnesium</keyword>
<keyword id="KW-0479">Metal-binding</keyword>